<accession>Q4ZZF5</accession>
<dbReference type="EC" id="6.1.1.19" evidence="1"/>
<dbReference type="EMBL" id="CP000075">
    <property type="protein sequence ID" value="AAY35467.1"/>
    <property type="molecule type" value="Genomic_DNA"/>
</dbReference>
<dbReference type="RefSeq" id="WP_011266371.1">
    <property type="nucleotide sequence ID" value="NC_007005.1"/>
</dbReference>
<dbReference type="RefSeq" id="YP_233505.1">
    <property type="nucleotide sequence ID" value="NC_007005.1"/>
</dbReference>
<dbReference type="SMR" id="Q4ZZF5"/>
<dbReference type="STRING" id="205918.Psyr_0397"/>
<dbReference type="KEGG" id="psb:Psyr_0397"/>
<dbReference type="PATRIC" id="fig|205918.7.peg.411"/>
<dbReference type="eggNOG" id="COG0018">
    <property type="taxonomic scope" value="Bacteria"/>
</dbReference>
<dbReference type="HOGENOM" id="CLU_006406_5_1_6"/>
<dbReference type="OrthoDB" id="9803211at2"/>
<dbReference type="Proteomes" id="UP000000426">
    <property type="component" value="Chromosome"/>
</dbReference>
<dbReference type="GO" id="GO:0005737">
    <property type="term" value="C:cytoplasm"/>
    <property type="evidence" value="ECO:0007669"/>
    <property type="project" value="UniProtKB-SubCell"/>
</dbReference>
<dbReference type="GO" id="GO:0004814">
    <property type="term" value="F:arginine-tRNA ligase activity"/>
    <property type="evidence" value="ECO:0007669"/>
    <property type="project" value="UniProtKB-UniRule"/>
</dbReference>
<dbReference type="GO" id="GO:0005524">
    <property type="term" value="F:ATP binding"/>
    <property type="evidence" value="ECO:0007669"/>
    <property type="project" value="UniProtKB-UniRule"/>
</dbReference>
<dbReference type="GO" id="GO:0006420">
    <property type="term" value="P:arginyl-tRNA aminoacylation"/>
    <property type="evidence" value="ECO:0007669"/>
    <property type="project" value="UniProtKB-UniRule"/>
</dbReference>
<dbReference type="CDD" id="cd07956">
    <property type="entry name" value="Anticodon_Ia_Arg"/>
    <property type="match status" value="1"/>
</dbReference>
<dbReference type="CDD" id="cd00671">
    <property type="entry name" value="ArgRS_core"/>
    <property type="match status" value="1"/>
</dbReference>
<dbReference type="FunFam" id="1.10.730.10:FF:000001">
    <property type="entry name" value="Arginine--tRNA ligase"/>
    <property type="match status" value="1"/>
</dbReference>
<dbReference type="FunFam" id="3.30.1360.70:FF:000003">
    <property type="entry name" value="Arginine--tRNA ligase"/>
    <property type="match status" value="1"/>
</dbReference>
<dbReference type="FunFam" id="3.40.50.620:FF:000030">
    <property type="entry name" value="Arginine--tRNA ligase"/>
    <property type="match status" value="1"/>
</dbReference>
<dbReference type="Gene3D" id="3.30.1360.70">
    <property type="entry name" value="Arginyl tRNA synthetase N-terminal domain"/>
    <property type="match status" value="1"/>
</dbReference>
<dbReference type="Gene3D" id="3.40.50.620">
    <property type="entry name" value="HUPs"/>
    <property type="match status" value="1"/>
</dbReference>
<dbReference type="Gene3D" id="1.10.730.10">
    <property type="entry name" value="Isoleucyl-tRNA Synthetase, Domain 1"/>
    <property type="match status" value="1"/>
</dbReference>
<dbReference type="HAMAP" id="MF_00123">
    <property type="entry name" value="Arg_tRNA_synth"/>
    <property type="match status" value="1"/>
</dbReference>
<dbReference type="InterPro" id="IPR001412">
    <property type="entry name" value="aa-tRNA-synth_I_CS"/>
</dbReference>
<dbReference type="InterPro" id="IPR001278">
    <property type="entry name" value="Arg-tRNA-ligase"/>
</dbReference>
<dbReference type="InterPro" id="IPR005148">
    <property type="entry name" value="Arg-tRNA-synth_N"/>
</dbReference>
<dbReference type="InterPro" id="IPR036695">
    <property type="entry name" value="Arg-tRNA-synth_N_sf"/>
</dbReference>
<dbReference type="InterPro" id="IPR035684">
    <property type="entry name" value="ArgRS_core"/>
</dbReference>
<dbReference type="InterPro" id="IPR008909">
    <property type="entry name" value="DALR_anticod-bd"/>
</dbReference>
<dbReference type="InterPro" id="IPR014729">
    <property type="entry name" value="Rossmann-like_a/b/a_fold"/>
</dbReference>
<dbReference type="InterPro" id="IPR009080">
    <property type="entry name" value="tRNAsynth_Ia_anticodon-bd"/>
</dbReference>
<dbReference type="NCBIfam" id="TIGR00456">
    <property type="entry name" value="argS"/>
    <property type="match status" value="1"/>
</dbReference>
<dbReference type="PANTHER" id="PTHR11956:SF5">
    <property type="entry name" value="ARGININE--TRNA LIGASE, CYTOPLASMIC"/>
    <property type="match status" value="1"/>
</dbReference>
<dbReference type="PANTHER" id="PTHR11956">
    <property type="entry name" value="ARGINYL-TRNA SYNTHETASE"/>
    <property type="match status" value="1"/>
</dbReference>
<dbReference type="Pfam" id="PF03485">
    <property type="entry name" value="Arg_tRNA_synt_N"/>
    <property type="match status" value="1"/>
</dbReference>
<dbReference type="Pfam" id="PF05746">
    <property type="entry name" value="DALR_1"/>
    <property type="match status" value="1"/>
</dbReference>
<dbReference type="Pfam" id="PF00750">
    <property type="entry name" value="tRNA-synt_1d"/>
    <property type="match status" value="1"/>
</dbReference>
<dbReference type="PRINTS" id="PR01038">
    <property type="entry name" value="TRNASYNTHARG"/>
</dbReference>
<dbReference type="SMART" id="SM01016">
    <property type="entry name" value="Arg_tRNA_synt_N"/>
    <property type="match status" value="1"/>
</dbReference>
<dbReference type="SMART" id="SM00836">
    <property type="entry name" value="DALR_1"/>
    <property type="match status" value="1"/>
</dbReference>
<dbReference type="SUPFAM" id="SSF47323">
    <property type="entry name" value="Anticodon-binding domain of a subclass of class I aminoacyl-tRNA synthetases"/>
    <property type="match status" value="1"/>
</dbReference>
<dbReference type="SUPFAM" id="SSF55190">
    <property type="entry name" value="Arginyl-tRNA synthetase (ArgRS), N-terminal 'additional' domain"/>
    <property type="match status" value="1"/>
</dbReference>
<dbReference type="SUPFAM" id="SSF52374">
    <property type="entry name" value="Nucleotidylyl transferase"/>
    <property type="match status" value="1"/>
</dbReference>
<dbReference type="PROSITE" id="PS00178">
    <property type="entry name" value="AA_TRNA_LIGASE_I"/>
    <property type="match status" value="1"/>
</dbReference>
<feature type="chain" id="PRO_0000242072" description="Arginine--tRNA ligase">
    <location>
        <begin position="1"/>
        <end position="579"/>
    </location>
</feature>
<feature type="short sequence motif" description="'HIGH' region">
    <location>
        <begin position="128"/>
        <end position="138"/>
    </location>
</feature>
<evidence type="ECO:0000255" key="1">
    <source>
        <dbReference type="HAMAP-Rule" id="MF_00123"/>
    </source>
</evidence>
<protein>
    <recommendedName>
        <fullName evidence="1">Arginine--tRNA ligase</fullName>
        <ecNumber evidence="1">6.1.1.19</ecNumber>
    </recommendedName>
    <alternativeName>
        <fullName evidence="1">Arginyl-tRNA synthetase</fullName>
        <shortName evidence="1">ArgRS</shortName>
    </alternativeName>
</protein>
<reference key="1">
    <citation type="journal article" date="2005" name="Proc. Natl. Acad. Sci. U.S.A.">
        <title>Comparison of the complete genome sequences of Pseudomonas syringae pv. syringae B728a and pv. tomato DC3000.</title>
        <authorList>
            <person name="Feil H."/>
            <person name="Feil W.S."/>
            <person name="Chain P."/>
            <person name="Larimer F."/>
            <person name="Dibartolo G."/>
            <person name="Copeland A."/>
            <person name="Lykidis A."/>
            <person name="Trong S."/>
            <person name="Nolan M."/>
            <person name="Goltsman E."/>
            <person name="Thiel J."/>
            <person name="Malfatti S."/>
            <person name="Loper J.E."/>
            <person name="Lapidus A."/>
            <person name="Detter J.C."/>
            <person name="Land M."/>
            <person name="Richardson P.M."/>
            <person name="Kyrpides N.C."/>
            <person name="Ivanova N."/>
            <person name="Lindow S.E."/>
        </authorList>
    </citation>
    <scope>NUCLEOTIDE SEQUENCE [LARGE SCALE GENOMIC DNA]</scope>
    <source>
        <strain>B728a</strain>
    </source>
</reference>
<organism>
    <name type="scientific">Pseudomonas syringae pv. syringae (strain B728a)</name>
    <dbReference type="NCBI Taxonomy" id="205918"/>
    <lineage>
        <taxon>Bacteria</taxon>
        <taxon>Pseudomonadati</taxon>
        <taxon>Pseudomonadota</taxon>
        <taxon>Gammaproteobacteria</taxon>
        <taxon>Pseudomonadales</taxon>
        <taxon>Pseudomonadaceae</taxon>
        <taxon>Pseudomonas</taxon>
        <taxon>Pseudomonas syringae</taxon>
    </lineage>
</organism>
<comment type="catalytic activity">
    <reaction evidence="1">
        <text>tRNA(Arg) + L-arginine + ATP = L-arginyl-tRNA(Arg) + AMP + diphosphate</text>
        <dbReference type="Rhea" id="RHEA:20301"/>
        <dbReference type="Rhea" id="RHEA-COMP:9658"/>
        <dbReference type="Rhea" id="RHEA-COMP:9673"/>
        <dbReference type="ChEBI" id="CHEBI:30616"/>
        <dbReference type="ChEBI" id="CHEBI:32682"/>
        <dbReference type="ChEBI" id="CHEBI:33019"/>
        <dbReference type="ChEBI" id="CHEBI:78442"/>
        <dbReference type="ChEBI" id="CHEBI:78513"/>
        <dbReference type="ChEBI" id="CHEBI:456215"/>
        <dbReference type="EC" id="6.1.1.19"/>
    </reaction>
</comment>
<comment type="subunit">
    <text evidence="1">Monomer.</text>
</comment>
<comment type="subcellular location">
    <subcellularLocation>
        <location evidence="1">Cytoplasm</location>
    </subcellularLocation>
</comment>
<comment type="similarity">
    <text evidence="1">Belongs to the class-I aminoacyl-tRNA synthetase family.</text>
</comment>
<sequence length="579" mass="63675">MKDTIRQLIQQALTRLVTEGVLPEGLTPAIQVENARDKTHGDFASNIAMMLAKPAGMKPRDLAEKLIAALPADQQISKVEIAGPGFLNFFQNTAALAARLDAALADPEKLSVRKAGAAQRVVVDLSAPNLAKEMHVGHLRSTIIGDGVANVLEFLGDTVIRQNHVGDWGTQFGMLLAYLQEKPATSDELSDLENFYRAAKQRFDESEEFAERARGLVVKLQAGDAECLALWTRFKDISLSHCQETYERLNVKLTPADVMGESAYNDDLANVVNDLKATGLLVESNGAQCVFLEEFRTADDTPLPVIVQKAGGGYLYATTDLAAIRYRSKVLKADRVLYFVDQRQALHFQQVFEVARRAGFVHDGMQLEHMGFGTMNGADGRPFKTRDGGTVKLIDLLDEAEERAYTLVREKNPEVAEAELRSIAKAVGISAVKYADLSKHRASDYSFNFDQMLSFEGNTAPYLLYAYTRVAGVFRKLGSAFDASKGQIVLAAPQEQELAARLAQFTETLNNVAEKGTPHVLCAYLYDLAGLFSSFYENCPILGAENPDQQQSRLRLAALTGRTLKQGLDLLGLETLERM</sequence>
<gene>
    <name evidence="1" type="primary">argS</name>
    <name type="ordered locus">Psyr_0397</name>
</gene>
<proteinExistence type="inferred from homology"/>
<name>SYR_PSEU2</name>
<keyword id="KW-0030">Aminoacyl-tRNA synthetase</keyword>
<keyword id="KW-0067">ATP-binding</keyword>
<keyword id="KW-0963">Cytoplasm</keyword>
<keyword id="KW-0436">Ligase</keyword>
<keyword id="KW-0547">Nucleotide-binding</keyword>
<keyword id="KW-0648">Protein biosynthesis</keyword>